<comment type="function">
    <text evidence="2 4 5 7">Farnesyl pyrophosphate synthase; part of the second module of ergosterol biosynthesis pathway that includes the middle steps of the pathway (By similarity). The second module involves the formation of farnesyl diphosphate, which is also an important intermediate in the biosynthesis of ubiquinone, dolichol, heme and prenylated proteins (By similarity). This module also plays a key role in the biosynthesis of triterpenes such as ganoderic acids (GA), a group of highly oxygenated lanostane-type triterpenoids which are well recognized as a main group of unique bioactive compounds in the medicinal mushroom Ganoderma lucidum (PubMed:22203490, PubMed:31253150). Activity by the mevalonate kinase first converts mevalonate into 5-phosphomevalonate (By similarity). 5-phosphomevalonate is then further converted to 5-diphosphomevalonate by the phosphomevalonate kinase (By similarity). The diphosphomevalonate decarboxylase MVD then produces isopentenyl diphosphate (PubMed:22203490). The isopentenyl-diphosphate delta-isomerase then catalyzes the 1,3-allylic rearrangement of the homoallylic substrate isopentenyl (IPP) to its highly electrophilic allylic isomer, dimethylallyl diphosphate (DMAPP) (By similarity). Finally the farnesyl diphosphate synthase FPS catalyzes the sequential condensation of isopentenyl pyrophosphate with dimethylallyl pyrophosphate, and then with the resultant geranylpyrophosphate to the ultimate product farnesyl pyrophosphate (PubMed:18540102, PubMed:31253150).</text>
</comment>
<comment type="catalytic activity">
    <reaction evidence="1">
        <text>isopentenyl diphosphate + dimethylallyl diphosphate = (2E)-geranyl diphosphate + diphosphate</text>
        <dbReference type="Rhea" id="RHEA:22408"/>
        <dbReference type="ChEBI" id="CHEBI:33019"/>
        <dbReference type="ChEBI" id="CHEBI:57623"/>
        <dbReference type="ChEBI" id="CHEBI:58057"/>
        <dbReference type="ChEBI" id="CHEBI:128769"/>
        <dbReference type="EC" id="2.5.1.1"/>
    </reaction>
    <physiologicalReaction direction="left-to-right" evidence="1">
        <dbReference type="Rhea" id="RHEA:22409"/>
    </physiologicalReaction>
</comment>
<comment type="catalytic activity">
    <reaction evidence="1">
        <text>isopentenyl diphosphate + (2E)-geranyl diphosphate = (2E,6E)-farnesyl diphosphate + diphosphate</text>
        <dbReference type="Rhea" id="RHEA:19361"/>
        <dbReference type="ChEBI" id="CHEBI:33019"/>
        <dbReference type="ChEBI" id="CHEBI:58057"/>
        <dbReference type="ChEBI" id="CHEBI:128769"/>
        <dbReference type="ChEBI" id="CHEBI:175763"/>
        <dbReference type="EC" id="2.5.1.10"/>
    </reaction>
    <physiologicalReaction direction="left-to-right" evidence="1">
        <dbReference type="Rhea" id="RHEA:19362"/>
    </physiologicalReaction>
</comment>
<comment type="cofactor">
    <cofactor evidence="3">
        <name>Mg(2+)</name>
        <dbReference type="ChEBI" id="CHEBI:18420"/>
    </cofactor>
    <text evidence="3">Binds 2 Mg(2+) ions per subunit.</text>
</comment>
<comment type="pathway">
    <text evidence="1">Isoprenoid biosynthesis; farnesyl diphosphate biosynthesis; farnesyl diphosphate from geranyl diphosphate and isopentenyl diphosphate: step 1/1.</text>
</comment>
<comment type="pathway">
    <text evidence="1">Isoprenoid biosynthesis; geranyl diphosphate biosynthesis; geranyl diphosphate from dimethylallyl diphosphate and isopentenyl diphosphate: step 1/1.</text>
</comment>
<comment type="induction">
    <text evidence="6">Expression is induced in ganoderic acid (GA) producing conditions.</text>
</comment>
<comment type="similarity">
    <text evidence="9">Belongs to the FPP/GGPP synthase family.</text>
</comment>
<name>ERG20_GANLU</name>
<dbReference type="EC" id="2.5.1.10" evidence="1"/>
<dbReference type="EC" id="2.5.1.1" evidence="1"/>
<dbReference type="EMBL" id="EU399544">
    <property type="protein sequence ID" value="ACB37020.1"/>
    <property type="molecule type" value="Genomic_DNA"/>
</dbReference>
<dbReference type="EMBL" id="EU399545">
    <property type="protein sequence ID" value="ACB37021.1"/>
    <property type="molecule type" value="mRNA"/>
</dbReference>
<dbReference type="SMR" id="B4YA15"/>
<dbReference type="UniPathway" id="UPA00259">
    <property type="reaction ID" value="UER00368"/>
</dbReference>
<dbReference type="UniPathway" id="UPA00260">
    <property type="reaction ID" value="UER00369"/>
</dbReference>
<dbReference type="GO" id="GO:0005737">
    <property type="term" value="C:cytoplasm"/>
    <property type="evidence" value="ECO:0007669"/>
    <property type="project" value="TreeGrafter"/>
</dbReference>
<dbReference type="GO" id="GO:0004337">
    <property type="term" value="F:(2E,6E)-farnesyl diphosphate synthase activity"/>
    <property type="evidence" value="ECO:0007669"/>
    <property type="project" value="UniProtKB-EC"/>
</dbReference>
<dbReference type="GO" id="GO:0004161">
    <property type="term" value="F:dimethylallyltranstransferase activity"/>
    <property type="evidence" value="ECO:0007669"/>
    <property type="project" value="UniProtKB-EC"/>
</dbReference>
<dbReference type="GO" id="GO:0046872">
    <property type="term" value="F:metal ion binding"/>
    <property type="evidence" value="ECO:0007669"/>
    <property type="project" value="UniProtKB-KW"/>
</dbReference>
<dbReference type="GO" id="GO:0045337">
    <property type="term" value="P:farnesyl diphosphate biosynthetic process"/>
    <property type="evidence" value="ECO:0007669"/>
    <property type="project" value="UniProtKB-UniPathway"/>
</dbReference>
<dbReference type="GO" id="GO:0033384">
    <property type="term" value="P:geranyl diphosphate biosynthetic process"/>
    <property type="evidence" value="ECO:0007669"/>
    <property type="project" value="UniProtKB-UniPathway"/>
</dbReference>
<dbReference type="CDD" id="cd00685">
    <property type="entry name" value="Trans_IPPS_HT"/>
    <property type="match status" value="1"/>
</dbReference>
<dbReference type="FunFam" id="1.10.600.10:FF:000006">
    <property type="entry name" value="Farnesyl pyrophosphate synthase"/>
    <property type="match status" value="1"/>
</dbReference>
<dbReference type="Gene3D" id="1.10.600.10">
    <property type="entry name" value="Farnesyl Diphosphate Synthase"/>
    <property type="match status" value="1"/>
</dbReference>
<dbReference type="InterPro" id="IPR039702">
    <property type="entry name" value="FPS1-like"/>
</dbReference>
<dbReference type="InterPro" id="IPR008949">
    <property type="entry name" value="Isoprenoid_synthase_dom_sf"/>
</dbReference>
<dbReference type="InterPro" id="IPR000092">
    <property type="entry name" value="Polyprenyl_synt"/>
</dbReference>
<dbReference type="InterPro" id="IPR033749">
    <property type="entry name" value="Polyprenyl_synt_CS"/>
</dbReference>
<dbReference type="PANTHER" id="PTHR11525:SF0">
    <property type="entry name" value="FARNESYL PYROPHOSPHATE SYNTHASE"/>
    <property type="match status" value="1"/>
</dbReference>
<dbReference type="PANTHER" id="PTHR11525">
    <property type="entry name" value="FARNESYL-PYROPHOSPHATE SYNTHETASE"/>
    <property type="match status" value="1"/>
</dbReference>
<dbReference type="Pfam" id="PF00348">
    <property type="entry name" value="polyprenyl_synt"/>
    <property type="match status" value="1"/>
</dbReference>
<dbReference type="SFLD" id="SFLDS00005">
    <property type="entry name" value="Isoprenoid_Synthase_Type_I"/>
    <property type="match status" value="1"/>
</dbReference>
<dbReference type="SUPFAM" id="SSF48576">
    <property type="entry name" value="Terpenoid synthases"/>
    <property type="match status" value="1"/>
</dbReference>
<dbReference type="PROSITE" id="PS00723">
    <property type="entry name" value="POLYPRENYL_SYNTHASE_1"/>
    <property type="match status" value="1"/>
</dbReference>
<dbReference type="PROSITE" id="PS00444">
    <property type="entry name" value="POLYPRENYL_SYNTHASE_2"/>
    <property type="match status" value="1"/>
</dbReference>
<keyword id="KW-0414">Isoprene biosynthesis</keyword>
<keyword id="KW-0444">Lipid biosynthesis</keyword>
<keyword id="KW-0443">Lipid metabolism</keyword>
<keyword id="KW-0460">Magnesium</keyword>
<keyword id="KW-0479">Metal-binding</keyword>
<keyword id="KW-0808">Transferase</keyword>
<organism>
    <name type="scientific">Ganoderma lucidum</name>
    <name type="common">Ling zhi medicinal fungus</name>
    <name type="synonym">Bracket fungus</name>
    <dbReference type="NCBI Taxonomy" id="5315"/>
    <lineage>
        <taxon>Eukaryota</taxon>
        <taxon>Fungi</taxon>
        <taxon>Dikarya</taxon>
        <taxon>Basidiomycota</taxon>
        <taxon>Agaricomycotina</taxon>
        <taxon>Agaricomycetes</taxon>
        <taxon>Polyporales</taxon>
        <taxon>Polyporaceae</taxon>
        <taxon>Ganoderma</taxon>
    </lineage>
</organism>
<accession>B4YA15</accession>
<proteinExistence type="evidence at transcript level"/>
<evidence type="ECO:0000250" key="1">
    <source>
        <dbReference type="UniProtKB" id="P08524"/>
    </source>
</evidence>
<evidence type="ECO:0000250" key="2">
    <source>
        <dbReference type="UniProtKB" id="P32377"/>
    </source>
</evidence>
<evidence type="ECO:0000250" key="3">
    <source>
        <dbReference type="UniProtKB" id="Q12051"/>
    </source>
</evidence>
<evidence type="ECO:0000269" key="4">
    <source>
    </source>
</evidence>
<evidence type="ECO:0000269" key="5">
    <source>
    </source>
</evidence>
<evidence type="ECO:0000269" key="6">
    <source>
    </source>
</evidence>
<evidence type="ECO:0000269" key="7">
    <source>
    </source>
</evidence>
<evidence type="ECO:0000303" key="8">
    <source>
    </source>
</evidence>
<evidence type="ECO:0000305" key="9"/>
<reference key="1">
    <citation type="journal article" date="2008" name="Biosci. Biotechnol. Biochem.">
        <title>Molecular cloning, characterization, and differential expression of a farnesyl-diphosphate synthase gene from the basidiomycetous fungus Ganoderma lucidum.</title>
        <authorList>
            <person name="Ding Y.X."/>
            <person name="Ou-Yang X."/>
            <person name="Shang C.H."/>
            <person name="Ren A."/>
            <person name="Shi L."/>
            <person name="Li Y.X."/>
            <person name="Zhao M.W."/>
        </authorList>
    </citation>
    <scope>NUCLEOTIDE SEQUENCE [GENOMIC DNA / MRNA]</scope>
    <scope>FUNCTION</scope>
    <scope>INDUCTION</scope>
</reference>
<reference key="2">
    <citation type="journal article" date="2012" name="Mol. Biol. Rep.">
        <title>Molecular cloning, characterization, and function analysis of a mevalonate pyrophosphate decarboxylase gene from Ganoderma lucidum.</title>
        <authorList>
            <person name="Shi L."/>
            <person name="Qin L."/>
            <person name="Xu Y."/>
            <person name="Ren A."/>
            <person name="Fang X."/>
            <person name="Mu D."/>
            <person name="Tan Q."/>
            <person name="Zhao M."/>
        </authorList>
    </citation>
    <scope>FUNCTION</scope>
    <source>
        <strain>HG</strain>
    </source>
</reference>
<reference key="3">
    <citation type="journal article" date="2019" name="Microb. Biotechnol.">
        <title>Enhanced production of individual ganoderic acids by integrating Vitreoscilla haemoglobin expression and calcium ion induction in liquid static cultures of Ganoderma lingzhi.</title>
        <authorList>
            <person name="Xu J.W."/>
            <person name="Yue T.H."/>
            <person name="Yu X."/>
            <person name="Zhao P."/>
            <person name="Li T."/>
            <person name="Li N."/>
        </authorList>
    </citation>
    <scope>INDUCTION</scope>
</reference>
<reference key="4">
    <citation type="journal article" date="2019" name="Microb. Cell Fact.">
        <title>Increased production of ganoderic acids by overexpression of homologous farnesyl diphosphate synthase and kinetic modeling of ganoderic acid production in Ganoderma lucidum.</title>
        <authorList>
            <person name="Fei Y."/>
            <person name="Li N."/>
            <person name="Zhang D.H."/>
            <person name="Xu J.W."/>
        </authorList>
    </citation>
    <scope>FUNCTION</scope>
    <scope>PATHWAY</scope>
</reference>
<gene>
    <name evidence="8" type="primary">FPS</name>
</gene>
<feature type="chain" id="PRO_0000454392" description="Farnesyl pyrophosphate synthase">
    <location>
        <begin position="1"/>
        <end position="360"/>
    </location>
</feature>
<feature type="binding site" evidence="3">
    <location>
        <position position="52"/>
    </location>
    <ligand>
        <name>isopentenyl diphosphate</name>
        <dbReference type="ChEBI" id="CHEBI:128769"/>
    </ligand>
</feature>
<feature type="binding site" evidence="3">
    <location>
        <position position="55"/>
    </location>
    <ligand>
        <name>isopentenyl diphosphate</name>
        <dbReference type="ChEBI" id="CHEBI:128769"/>
    </ligand>
</feature>
<feature type="binding site" evidence="3">
    <location>
        <position position="90"/>
    </location>
    <ligand>
        <name>isopentenyl diphosphate</name>
        <dbReference type="ChEBI" id="CHEBI:128769"/>
    </ligand>
</feature>
<feature type="binding site" evidence="3">
    <location>
        <position position="97"/>
    </location>
    <ligand>
        <name>Mg(2+)</name>
        <dbReference type="ChEBI" id="CHEBI:18420"/>
        <label>1</label>
    </ligand>
</feature>
<feature type="binding site" evidence="3">
    <location>
        <position position="97"/>
    </location>
    <ligand>
        <name>Mg(2+)</name>
        <dbReference type="ChEBI" id="CHEBI:18420"/>
        <label>2</label>
    </ligand>
</feature>
<feature type="binding site" evidence="3">
    <location>
        <position position="101"/>
    </location>
    <ligand>
        <name>Mg(2+)</name>
        <dbReference type="ChEBI" id="CHEBI:18420"/>
        <label>1</label>
    </ligand>
</feature>
<feature type="binding site" evidence="3">
    <location>
        <position position="101"/>
    </location>
    <ligand>
        <name>Mg(2+)</name>
        <dbReference type="ChEBI" id="CHEBI:18420"/>
        <label>2</label>
    </ligand>
</feature>
<feature type="binding site" evidence="3">
    <location>
        <position position="106"/>
    </location>
    <ligand>
        <name>dimethylallyl diphosphate</name>
        <dbReference type="ChEBI" id="CHEBI:57623"/>
    </ligand>
</feature>
<feature type="binding site" evidence="3">
    <location>
        <position position="107"/>
    </location>
    <ligand>
        <name>isopentenyl diphosphate</name>
        <dbReference type="ChEBI" id="CHEBI:128769"/>
    </ligand>
</feature>
<feature type="binding site" evidence="3">
    <location>
        <position position="194"/>
    </location>
    <ligand>
        <name>dimethylallyl diphosphate</name>
        <dbReference type="ChEBI" id="CHEBI:57623"/>
    </ligand>
</feature>
<feature type="binding site" evidence="3">
    <location>
        <position position="195"/>
    </location>
    <ligand>
        <name>dimethylallyl diphosphate</name>
        <dbReference type="ChEBI" id="CHEBI:57623"/>
    </ligand>
</feature>
<feature type="binding site" evidence="3">
    <location>
        <position position="237"/>
    </location>
    <ligand>
        <name>dimethylallyl diphosphate</name>
        <dbReference type="ChEBI" id="CHEBI:57623"/>
    </ligand>
</feature>
<feature type="binding site" evidence="3">
    <location>
        <position position="254"/>
    </location>
    <ligand>
        <name>dimethylallyl diphosphate</name>
        <dbReference type="ChEBI" id="CHEBI:57623"/>
    </ligand>
</feature>
<feature type="binding site" evidence="3">
    <location>
        <position position="263"/>
    </location>
    <ligand>
        <name>dimethylallyl diphosphate</name>
        <dbReference type="ChEBI" id="CHEBI:57623"/>
    </ligand>
</feature>
<sequence length="360" mass="41014">MADAKAQKRQKFDNVFPKLREELLAYLNQEGMPQDAVSWFQRNLDYNVPGGKLNRGISVVDSVEILKGRKLNDDEYFKAALLGWCVEFLQAFFLVSDDMMDQSVTRRGQPCWFRVEGINLIAINDSFMLEGAIYYLLKKHFRSEPYYVHLLELFHDTTFQTEIGQLIDLITAPEDHVDLSKFSLAKHQKIVIYKTAYYSFYLPVALAMYTCGVPHAPANDPYALAQSILIPLGEYFQVQDDFLDFAAPPEVLGKVGTDIVDNKCSWCVNAALARASPAQRRVLDDNYGLKDKEAEARVKALYEELGIRDEFAAYEERAYARIVGLIETIPAEGADVGAGDVRLKREVFKAFLDKIYKRQK</sequence>
<protein>
    <recommendedName>
        <fullName evidence="1">Farnesyl pyrophosphate synthase</fullName>
        <shortName evidence="1">FPP synthase</shortName>
        <shortName evidence="8">FPS</shortName>
        <ecNumber evidence="1">2.5.1.10</ecNumber>
    </recommendedName>
    <alternativeName>
        <fullName evidence="1">(2E,6E)-farnesyl diphosphate synthase</fullName>
    </alternativeName>
    <alternativeName>
        <fullName evidence="1">Dimethylallyltranstransferase</fullName>
        <ecNumber evidence="1">2.5.1.1</ecNumber>
    </alternativeName>
    <alternativeName>
        <fullName evidence="8">Farnesyl diphosphate synthase</fullName>
    </alternativeName>
    <alternativeName>
        <fullName evidence="1">Geranyltranstransferase</fullName>
    </alternativeName>
</protein>